<organism>
    <name type="scientific">Mus musculus</name>
    <name type="common">Mouse</name>
    <dbReference type="NCBI Taxonomy" id="10090"/>
    <lineage>
        <taxon>Eukaryota</taxon>
        <taxon>Metazoa</taxon>
        <taxon>Chordata</taxon>
        <taxon>Craniata</taxon>
        <taxon>Vertebrata</taxon>
        <taxon>Euteleostomi</taxon>
        <taxon>Mammalia</taxon>
        <taxon>Eutheria</taxon>
        <taxon>Euarchontoglires</taxon>
        <taxon>Glires</taxon>
        <taxon>Rodentia</taxon>
        <taxon>Myomorpha</taxon>
        <taxon>Muroidea</taxon>
        <taxon>Muridae</taxon>
        <taxon>Murinae</taxon>
        <taxon>Mus</taxon>
        <taxon>Mus</taxon>
    </lineage>
</organism>
<sequence>MDFSRPSFSPWRWLTLVASLLTCGICQASGQIFISPDSLLGVEKYRTILTLENVPEDVLEYSWYRGKDNSTENMIFSYKPPNTRHPGPSYSGRENVTRAGSLVVRMSAVNDTGYYTVEVDTSNETQRATGWLQIVKLRSNPGISANTSALVEGMDSVVAKCLTNSSNISWYVNFVPTSGSNRMTISPDGKTLIIHRVSRYDHTLQCAIEDVPEILQKSELIQLTVAYGPDYVSLWTQPYFFAGVLTADIGSSVQLECNCFSKPEPRYHWIHNGSFLSIPENNMTLPSLSWEQMGSYRCVVENPETQLTFYRDVTIQPPRPPLPTVNRELYIPGPLVIFLILLTSLGGAFVCRVLVYSLFQSCSRGKTCHKCPWQTN</sequence>
<reference key="1">
    <citation type="journal article" date="2005" name="Science">
        <title>The transcriptional landscape of the mammalian genome.</title>
        <authorList>
            <person name="Carninci P."/>
            <person name="Kasukawa T."/>
            <person name="Katayama S."/>
            <person name="Gough J."/>
            <person name="Frith M.C."/>
            <person name="Maeda N."/>
            <person name="Oyama R."/>
            <person name="Ravasi T."/>
            <person name="Lenhard B."/>
            <person name="Wells C."/>
            <person name="Kodzius R."/>
            <person name="Shimokawa K."/>
            <person name="Bajic V.B."/>
            <person name="Brenner S.E."/>
            <person name="Batalov S."/>
            <person name="Forrest A.R."/>
            <person name="Zavolan M."/>
            <person name="Davis M.J."/>
            <person name="Wilming L.G."/>
            <person name="Aidinis V."/>
            <person name="Allen J.E."/>
            <person name="Ambesi-Impiombato A."/>
            <person name="Apweiler R."/>
            <person name="Aturaliya R.N."/>
            <person name="Bailey T.L."/>
            <person name="Bansal M."/>
            <person name="Baxter L."/>
            <person name="Beisel K.W."/>
            <person name="Bersano T."/>
            <person name="Bono H."/>
            <person name="Chalk A.M."/>
            <person name="Chiu K.P."/>
            <person name="Choudhary V."/>
            <person name="Christoffels A."/>
            <person name="Clutterbuck D.R."/>
            <person name="Crowe M.L."/>
            <person name="Dalla E."/>
            <person name="Dalrymple B.P."/>
            <person name="de Bono B."/>
            <person name="Della Gatta G."/>
            <person name="di Bernardo D."/>
            <person name="Down T."/>
            <person name="Engstrom P."/>
            <person name="Fagiolini M."/>
            <person name="Faulkner G."/>
            <person name="Fletcher C.F."/>
            <person name="Fukushima T."/>
            <person name="Furuno M."/>
            <person name="Futaki S."/>
            <person name="Gariboldi M."/>
            <person name="Georgii-Hemming P."/>
            <person name="Gingeras T.R."/>
            <person name="Gojobori T."/>
            <person name="Green R.E."/>
            <person name="Gustincich S."/>
            <person name="Harbers M."/>
            <person name="Hayashi Y."/>
            <person name="Hensch T.K."/>
            <person name="Hirokawa N."/>
            <person name="Hill D."/>
            <person name="Huminiecki L."/>
            <person name="Iacono M."/>
            <person name="Ikeo K."/>
            <person name="Iwama A."/>
            <person name="Ishikawa T."/>
            <person name="Jakt M."/>
            <person name="Kanapin A."/>
            <person name="Katoh M."/>
            <person name="Kawasawa Y."/>
            <person name="Kelso J."/>
            <person name="Kitamura H."/>
            <person name="Kitano H."/>
            <person name="Kollias G."/>
            <person name="Krishnan S.P."/>
            <person name="Kruger A."/>
            <person name="Kummerfeld S.K."/>
            <person name="Kurochkin I.V."/>
            <person name="Lareau L.F."/>
            <person name="Lazarevic D."/>
            <person name="Lipovich L."/>
            <person name="Liu J."/>
            <person name="Liuni S."/>
            <person name="McWilliam S."/>
            <person name="Madan Babu M."/>
            <person name="Madera M."/>
            <person name="Marchionni L."/>
            <person name="Matsuda H."/>
            <person name="Matsuzawa S."/>
            <person name="Miki H."/>
            <person name="Mignone F."/>
            <person name="Miyake S."/>
            <person name="Morris K."/>
            <person name="Mottagui-Tabar S."/>
            <person name="Mulder N."/>
            <person name="Nakano N."/>
            <person name="Nakauchi H."/>
            <person name="Ng P."/>
            <person name="Nilsson R."/>
            <person name="Nishiguchi S."/>
            <person name="Nishikawa S."/>
            <person name="Nori F."/>
            <person name="Ohara O."/>
            <person name="Okazaki Y."/>
            <person name="Orlando V."/>
            <person name="Pang K.C."/>
            <person name="Pavan W.J."/>
            <person name="Pavesi G."/>
            <person name="Pesole G."/>
            <person name="Petrovsky N."/>
            <person name="Piazza S."/>
            <person name="Reed J."/>
            <person name="Reid J.F."/>
            <person name="Ring B.Z."/>
            <person name="Ringwald M."/>
            <person name="Rost B."/>
            <person name="Ruan Y."/>
            <person name="Salzberg S.L."/>
            <person name="Sandelin A."/>
            <person name="Schneider C."/>
            <person name="Schoenbach C."/>
            <person name="Sekiguchi K."/>
            <person name="Semple C.A."/>
            <person name="Seno S."/>
            <person name="Sessa L."/>
            <person name="Sheng Y."/>
            <person name="Shibata Y."/>
            <person name="Shimada H."/>
            <person name="Shimada K."/>
            <person name="Silva D."/>
            <person name="Sinclair B."/>
            <person name="Sperling S."/>
            <person name="Stupka E."/>
            <person name="Sugiura K."/>
            <person name="Sultana R."/>
            <person name="Takenaka Y."/>
            <person name="Taki K."/>
            <person name="Tammoja K."/>
            <person name="Tan S.L."/>
            <person name="Tang S."/>
            <person name="Taylor M.S."/>
            <person name="Tegner J."/>
            <person name="Teichmann S.A."/>
            <person name="Ueda H.R."/>
            <person name="van Nimwegen E."/>
            <person name="Verardo R."/>
            <person name="Wei C.L."/>
            <person name="Yagi K."/>
            <person name="Yamanishi H."/>
            <person name="Zabarovsky E."/>
            <person name="Zhu S."/>
            <person name="Zimmer A."/>
            <person name="Hide W."/>
            <person name="Bult C."/>
            <person name="Grimmond S.M."/>
            <person name="Teasdale R.D."/>
            <person name="Liu E.T."/>
            <person name="Brusic V."/>
            <person name="Quackenbush J."/>
            <person name="Wahlestedt C."/>
            <person name="Mattick J.S."/>
            <person name="Hume D.A."/>
            <person name="Kai C."/>
            <person name="Sasaki D."/>
            <person name="Tomaru Y."/>
            <person name="Fukuda S."/>
            <person name="Kanamori-Katayama M."/>
            <person name="Suzuki M."/>
            <person name="Aoki J."/>
            <person name="Arakawa T."/>
            <person name="Iida J."/>
            <person name="Imamura K."/>
            <person name="Itoh M."/>
            <person name="Kato T."/>
            <person name="Kawaji H."/>
            <person name="Kawagashira N."/>
            <person name="Kawashima T."/>
            <person name="Kojima M."/>
            <person name="Kondo S."/>
            <person name="Konno H."/>
            <person name="Nakano K."/>
            <person name="Ninomiya N."/>
            <person name="Nishio T."/>
            <person name="Okada M."/>
            <person name="Plessy C."/>
            <person name="Shibata K."/>
            <person name="Shiraki T."/>
            <person name="Suzuki S."/>
            <person name="Tagami M."/>
            <person name="Waki K."/>
            <person name="Watahiki A."/>
            <person name="Okamura-Oho Y."/>
            <person name="Suzuki H."/>
            <person name="Kawai J."/>
            <person name="Hayashizaki Y."/>
        </authorList>
    </citation>
    <scope>NUCLEOTIDE SEQUENCE [LARGE SCALE MRNA]</scope>
    <source>
        <strain>C57BL/6J</strain>
        <tissue>Small intestine</tissue>
    </source>
</reference>
<reference key="2">
    <citation type="journal article" date="2004" name="Genome Res.">
        <title>The status, quality, and expansion of the NIH full-length cDNA project: the Mammalian Gene Collection (MGC).</title>
        <authorList>
            <consortium name="The MGC Project Team"/>
        </authorList>
    </citation>
    <scope>NUCLEOTIDE SEQUENCE [LARGE SCALE MRNA]</scope>
    <source>
        <strain>FVB/N</strain>
        <tissue>Colon</tissue>
    </source>
</reference>
<reference key="3">
    <citation type="journal article" date="2005" name="Genomics">
        <title>Identification of a novel group of evolutionarily conserved members within the rapidly diverging murine Cea family.</title>
        <authorList>
            <person name="Zebhauser R."/>
            <person name="Kammerer R."/>
            <person name="Eisenried A."/>
            <person name="McLellan A."/>
            <person name="Moore T."/>
            <person name="Zimmermann W."/>
        </authorList>
    </citation>
    <scope>TISSUE SPECIFICITY</scope>
</reference>
<feature type="signal peptide" evidence="1">
    <location>
        <begin position="1"/>
        <end position="30"/>
    </location>
</feature>
<feature type="chain" id="PRO_0000339379" description="Cell adhesion molecule CEACAM18">
    <location>
        <begin position="31"/>
        <end position="376"/>
    </location>
</feature>
<feature type="topological domain" description="Extracellular" evidence="1">
    <location>
        <begin position="31"/>
        <end position="330"/>
    </location>
</feature>
<feature type="transmembrane region" description="Helical" evidence="1">
    <location>
        <begin position="331"/>
        <end position="351"/>
    </location>
</feature>
<feature type="topological domain" description="Cytoplasmic" evidence="1">
    <location>
        <begin position="352"/>
        <end position="376"/>
    </location>
</feature>
<feature type="domain" description="Ig-like C2-type">
    <location>
        <begin position="229"/>
        <end position="314"/>
    </location>
</feature>
<feature type="glycosylation site" description="N-linked (GlcNAc...) asparagine" evidence="1">
    <location>
        <position position="69"/>
    </location>
</feature>
<feature type="glycosylation site" description="N-linked (GlcNAc...) asparagine" evidence="1">
    <location>
        <position position="95"/>
    </location>
</feature>
<feature type="glycosylation site" description="N-linked (GlcNAc...) asparagine" evidence="1">
    <location>
        <position position="110"/>
    </location>
</feature>
<feature type="disulfide bond" evidence="2">
    <location>
        <begin position="257"/>
        <end position="298"/>
    </location>
</feature>
<proteinExistence type="evidence at transcript level"/>
<dbReference type="EMBL" id="AK008389">
    <property type="protein sequence ID" value="BAB25642.1"/>
    <property type="molecule type" value="mRNA"/>
</dbReference>
<dbReference type="EMBL" id="BC042780">
    <property type="protein sequence ID" value="AAH42780.1"/>
    <property type="molecule type" value="mRNA"/>
</dbReference>
<dbReference type="CCDS" id="CCDS21177.1"/>
<dbReference type="RefSeq" id="NP_082512.1">
    <property type="nucleotide sequence ID" value="NM_028236.2"/>
</dbReference>
<dbReference type="SMR" id="Q9D871"/>
<dbReference type="STRING" id="10090.ENSMUSP00000032663"/>
<dbReference type="GlyCosmos" id="Q9D871">
    <property type="glycosylation" value="3 sites, No reported glycans"/>
</dbReference>
<dbReference type="GlyGen" id="Q9D871">
    <property type="glycosylation" value="3 sites"/>
</dbReference>
<dbReference type="PaxDb" id="10090-ENSMUSP00000032663"/>
<dbReference type="ProteomicsDB" id="281453"/>
<dbReference type="Antibodypedia" id="66739">
    <property type="antibodies" value="37 antibodies from 9 providers"/>
</dbReference>
<dbReference type="DNASU" id="72431"/>
<dbReference type="Ensembl" id="ENSMUST00000032663.10">
    <property type="protein sequence ID" value="ENSMUSP00000032663.9"/>
    <property type="gene ID" value="ENSMUSG00000030472.10"/>
</dbReference>
<dbReference type="GeneID" id="72431"/>
<dbReference type="KEGG" id="mmu:72431"/>
<dbReference type="UCSC" id="uc009gnf.1">
    <property type="organism name" value="mouse"/>
</dbReference>
<dbReference type="AGR" id="MGI:1919681"/>
<dbReference type="CTD" id="729767"/>
<dbReference type="MGI" id="MGI:1919681">
    <property type="gene designation" value="Ceacam18"/>
</dbReference>
<dbReference type="VEuPathDB" id="HostDB:ENSMUSG00000030472"/>
<dbReference type="eggNOG" id="ENOG502RU0U">
    <property type="taxonomic scope" value="Eukaryota"/>
</dbReference>
<dbReference type="GeneTree" id="ENSGT01100000263479"/>
<dbReference type="HOGENOM" id="CLU_024555_0_0_1"/>
<dbReference type="InParanoid" id="Q9D871"/>
<dbReference type="OMA" id="SLAWEQM"/>
<dbReference type="OrthoDB" id="6159398at2759"/>
<dbReference type="PhylomeDB" id="Q9D871"/>
<dbReference type="TreeFam" id="TF336859"/>
<dbReference type="BioGRID-ORCS" id="72431">
    <property type="hits" value="4 hits in 78 CRISPR screens"/>
</dbReference>
<dbReference type="PRO" id="PR:Q9D871"/>
<dbReference type="Proteomes" id="UP000000589">
    <property type="component" value="Chromosome 7"/>
</dbReference>
<dbReference type="RNAct" id="Q9D871">
    <property type="molecule type" value="protein"/>
</dbReference>
<dbReference type="Bgee" id="ENSMUSG00000030472">
    <property type="expression patterns" value="Expressed in small intestine Peyer's patch and 15 other cell types or tissues"/>
</dbReference>
<dbReference type="GO" id="GO:0016020">
    <property type="term" value="C:membrane"/>
    <property type="evidence" value="ECO:0007669"/>
    <property type="project" value="UniProtKB-SubCell"/>
</dbReference>
<dbReference type="CDD" id="cd05774">
    <property type="entry name" value="IgV_CEACAM_D1"/>
    <property type="match status" value="1"/>
</dbReference>
<dbReference type="Gene3D" id="2.60.40.10">
    <property type="entry name" value="Immunoglobulins"/>
    <property type="match status" value="3"/>
</dbReference>
<dbReference type="InterPro" id="IPR007110">
    <property type="entry name" value="Ig-like_dom"/>
</dbReference>
<dbReference type="InterPro" id="IPR036179">
    <property type="entry name" value="Ig-like_dom_sf"/>
</dbReference>
<dbReference type="InterPro" id="IPR013783">
    <property type="entry name" value="Ig-like_fold"/>
</dbReference>
<dbReference type="InterPro" id="IPR003599">
    <property type="entry name" value="Ig_sub"/>
</dbReference>
<dbReference type="InterPro" id="IPR003598">
    <property type="entry name" value="Ig_sub2"/>
</dbReference>
<dbReference type="InterPro" id="IPR013106">
    <property type="entry name" value="Ig_V-set"/>
</dbReference>
<dbReference type="InterPro" id="IPR052598">
    <property type="entry name" value="IgSF_CEA-related"/>
</dbReference>
<dbReference type="PANTHER" id="PTHR44337:SF10">
    <property type="entry name" value="CARCINOEMBRYONIC ANTIGEN-RELATED CELL ADHESION MOLECULE 18"/>
    <property type="match status" value="1"/>
</dbReference>
<dbReference type="PANTHER" id="PTHR44337">
    <property type="entry name" value="CARCINOEMBRYONIC ANTIGEN-RELATED CELL ADHESION MOLECULE 8"/>
    <property type="match status" value="1"/>
</dbReference>
<dbReference type="Pfam" id="PF13895">
    <property type="entry name" value="Ig_2"/>
    <property type="match status" value="1"/>
</dbReference>
<dbReference type="Pfam" id="PF07686">
    <property type="entry name" value="V-set"/>
    <property type="match status" value="1"/>
</dbReference>
<dbReference type="SMART" id="SM00409">
    <property type="entry name" value="IG"/>
    <property type="match status" value="3"/>
</dbReference>
<dbReference type="SMART" id="SM00408">
    <property type="entry name" value="IGc2"/>
    <property type="match status" value="1"/>
</dbReference>
<dbReference type="SUPFAM" id="SSF48726">
    <property type="entry name" value="Immunoglobulin"/>
    <property type="match status" value="2"/>
</dbReference>
<dbReference type="PROSITE" id="PS50835">
    <property type="entry name" value="IG_LIKE"/>
    <property type="match status" value="1"/>
</dbReference>
<keyword id="KW-1015">Disulfide bond</keyword>
<keyword id="KW-0325">Glycoprotein</keyword>
<keyword id="KW-0393">Immunoglobulin domain</keyword>
<keyword id="KW-0472">Membrane</keyword>
<keyword id="KW-1185">Reference proteome</keyword>
<keyword id="KW-0732">Signal</keyword>
<keyword id="KW-0812">Transmembrane</keyword>
<keyword id="KW-1133">Transmembrane helix</keyword>
<accession>Q9D871</accession>
<protein>
    <recommendedName>
        <fullName evidence="4">Cell adhesion molecule CEACAM18</fullName>
    </recommendedName>
    <alternativeName>
        <fullName>Carcinoembryonic antigen-related cell adhesion molecule 18</fullName>
        <shortName evidence="5">CEA cell adhesion molecule 18</shortName>
    </alternativeName>
</protein>
<evidence type="ECO:0000255" key="1"/>
<evidence type="ECO:0000255" key="2">
    <source>
        <dbReference type="PROSITE-ProRule" id="PRU00114"/>
    </source>
</evidence>
<evidence type="ECO:0000269" key="3">
    <source>
    </source>
</evidence>
<evidence type="ECO:0000305" key="4"/>
<evidence type="ECO:0000312" key="5">
    <source>
        <dbReference type="MGI" id="MGI:1919681"/>
    </source>
</evidence>
<name>CEA18_MOUSE</name>
<gene>
    <name evidence="5" type="primary">Ceacam18</name>
</gene>
<comment type="subcellular location">
    <subcellularLocation>
        <location evidence="4">Membrane</location>
        <topology evidence="4">Single-pass type I membrane protein</topology>
    </subcellularLocation>
</comment>
<comment type="tissue specificity">
    <text evidence="3">Mostly expressed in the small and large intestine and at lower levels also in other organs.</text>
</comment>
<comment type="similarity">
    <text evidence="4">Belongs to the immunoglobulin superfamily. CEA family.</text>
</comment>